<sequence length="444" mass="50673">MFSKLKKTWYADDFSYFIRNFGVFTLIFSTMTLIILQVMHSSLYTSVDDKLHGLSENPQAVIQLAINRATEEIKDLENARADASKVEIKPNVSSNTEVILFDKDFTQLLSGNRFLGLDKIKLEKKELGHIYQIQVFNSYGQEEIYRVILMETNISSVSTNIKYAAVLINTSQLEQASQKHEQLIVVVMASFWILSLLASLYLARVSVRPLLESMQKQQSFVENASHELRTPLAVLQNRLETLFRKPEATIMDVSESIASSLEEVRNMRFLTTSLLNLARRDDGIKPELAEVPTSFFNTTFTNYEMIASENNRVFRFENRIHRTIVTDQLLLKQLMTILFDNAVKYTEEDGEIDFLISATDRNLYLLVSDNGIGISTEDKKKIFDRFYRVDKARTRQKGGFGLGLSLAKQIVDALKGTVTVKDNKPKGTIFEVKIAIQTPSKKKK</sequence>
<gene>
    <name type="primary">ciaH</name>
    <name type="ordered locus">SP_0799</name>
</gene>
<organism>
    <name type="scientific">Streptococcus pneumoniae serotype 4 (strain ATCC BAA-334 / TIGR4)</name>
    <dbReference type="NCBI Taxonomy" id="170187"/>
    <lineage>
        <taxon>Bacteria</taxon>
        <taxon>Bacillati</taxon>
        <taxon>Bacillota</taxon>
        <taxon>Bacilli</taxon>
        <taxon>Lactobacillales</taxon>
        <taxon>Streptococcaceae</taxon>
        <taxon>Streptococcus</taxon>
    </lineage>
</organism>
<proteinExistence type="inferred from homology"/>
<name>CIAH_STRPN</name>
<keyword id="KW-0067">ATP-binding</keyword>
<keyword id="KW-1003">Cell membrane</keyword>
<keyword id="KW-0178">Competence</keyword>
<keyword id="KW-0418">Kinase</keyword>
<keyword id="KW-0472">Membrane</keyword>
<keyword id="KW-0547">Nucleotide-binding</keyword>
<keyword id="KW-0597">Phosphoprotein</keyword>
<keyword id="KW-1185">Reference proteome</keyword>
<keyword id="KW-0808">Transferase</keyword>
<keyword id="KW-0812">Transmembrane</keyword>
<keyword id="KW-1133">Transmembrane helix</keyword>
<keyword id="KW-0902">Two-component regulatory system</keyword>
<accession>P0A4I5</accession>
<accession>Q54955</accession>
<feature type="chain" id="PRO_0000074722" description="Sensor protein CiaH">
    <location>
        <begin position="1"/>
        <end position="444"/>
    </location>
</feature>
<feature type="transmembrane region" description="Helical" evidence="2">
    <location>
        <begin position="21"/>
        <end position="41"/>
    </location>
</feature>
<feature type="transmembrane region" description="Helical" evidence="2">
    <location>
        <begin position="183"/>
        <end position="203"/>
    </location>
</feature>
<feature type="domain" description="Histidine kinase" evidence="3">
    <location>
        <begin position="223"/>
        <end position="438"/>
    </location>
</feature>
<feature type="modified residue" description="Phosphohistidine; by autocatalysis" evidence="3">
    <location>
        <position position="226"/>
    </location>
</feature>
<comment type="function">
    <text evidence="1">Member of the two-component regulatory system CiaH/CiaR. Involved in early steps of competence regulation and in penicillin susceptibility. Probably phosphorylates CiaR (By similarity).</text>
</comment>
<comment type="catalytic activity">
    <reaction>
        <text>ATP + protein L-histidine = ADP + protein N-phospho-L-histidine.</text>
        <dbReference type="EC" id="2.7.13.3"/>
    </reaction>
</comment>
<comment type="subcellular location">
    <subcellularLocation>
        <location evidence="1">Cell membrane</location>
        <topology evidence="1">Multi-pass membrane protein</topology>
    </subcellularLocation>
</comment>
<dbReference type="EC" id="2.7.13.3"/>
<dbReference type="EMBL" id="AE005672">
    <property type="protein sequence ID" value="AAK74936.1"/>
    <property type="molecule type" value="Genomic_DNA"/>
</dbReference>
<dbReference type="PIR" id="G95092">
    <property type="entry name" value="G95092"/>
</dbReference>
<dbReference type="RefSeq" id="WP_000491790.1">
    <property type="nucleotide sequence ID" value="NZ_CP155539.1"/>
</dbReference>
<dbReference type="SMR" id="P0A4I5"/>
<dbReference type="PaxDb" id="170187-SP_0799"/>
<dbReference type="EnsemblBacteria" id="AAK74936">
    <property type="protein sequence ID" value="AAK74936"/>
    <property type="gene ID" value="SP_0799"/>
</dbReference>
<dbReference type="GeneID" id="45653830"/>
<dbReference type="KEGG" id="spn:SP_0799"/>
<dbReference type="eggNOG" id="COG5002">
    <property type="taxonomic scope" value="Bacteria"/>
</dbReference>
<dbReference type="PhylomeDB" id="P0A4I5"/>
<dbReference type="BioCyc" id="SPNE170187:G1FZB-817-MONOMER"/>
<dbReference type="Proteomes" id="UP000000585">
    <property type="component" value="Chromosome"/>
</dbReference>
<dbReference type="GO" id="GO:0005886">
    <property type="term" value="C:plasma membrane"/>
    <property type="evidence" value="ECO:0007669"/>
    <property type="project" value="UniProtKB-SubCell"/>
</dbReference>
<dbReference type="GO" id="GO:0005524">
    <property type="term" value="F:ATP binding"/>
    <property type="evidence" value="ECO:0007669"/>
    <property type="project" value="UniProtKB-KW"/>
</dbReference>
<dbReference type="GO" id="GO:0004721">
    <property type="term" value="F:phosphoprotein phosphatase activity"/>
    <property type="evidence" value="ECO:0007669"/>
    <property type="project" value="TreeGrafter"/>
</dbReference>
<dbReference type="GO" id="GO:0000155">
    <property type="term" value="F:phosphorelay sensor kinase activity"/>
    <property type="evidence" value="ECO:0007669"/>
    <property type="project" value="InterPro"/>
</dbReference>
<dbReference type="GO" id="GO:0016036">
    <property type="term" value="P:cellular response to phosphate starvation"/>
    <property type="evidence" value="ECO:0007669"/>
    <property type="project" value="TreeGrafter"/>
</dbReference>
<dbReference type="GO" id="GO:0030420">
    <property type="term" value="P:establishment of competence for transformation"/>
    <property type="evidence" value="ECO:0007669"/>
    <property type="project" value="UniProtKB-KW"/>
</dbReference>
<dbReference type="CDD" id="cd00075">
    <property type="entry name" value="HATPase"/>
    <property type="match status" value="1"/>
</dbReference>
<dbReference type="CDD" id="cd00082">
    <property type="entry name" value="HisKA"/>
    <property type="match status" value="1"/>
</dbReference>
<dbReference type="FunFam" id="3.30.565.10:FF:000006">
    <property type="entry name" value="Sensor histidine kinase WalK"/>
    <property type="match status" value="1"/>
</dbReference>
<dbReference type="Gene3D" id="1.10.287.130">
    <property type="match status" value="1"/>
</dbReference>
<dbReference type="Gene3D" id="3.30.565.10">
    <property type="entry name" value="Histidine kinase-like ATPase, C-terminal domain"/>
    <property type="match status" value="1"/>
</dbReference>
<dbReference type="InterPro" id="IPR050351">
    <property type="entry name" value="2-comp_sensor_kinase"/>
</dbReference>
<dbReference type="InterPro" id="IPR036890">
    <property type="entry name" value="HATPase_C_sf"/>
</dbReference>
<dbReference type="InterPro" id="IPR005467">
    <property type="entry name" value="His_kinase_dom"/>
</dbReference>
<dbReference type="InterPro" id="IPR003661">
    <property type="entry name" value="HisK_dim/P_dom"/>
</dbReference>
<dbReference type="InterPro" id="IPR036097">
    <property type="entry name" value="HisK_dim/P_sf"/>
</dbReference>
<dbReference type="InterPro" id="IPR004358">
    <property type="entry name" value="Sig_transdc_His_kin-like_C"/>
</dbReference>
<dbReference type="PANTHER" id="PTHR45453">
    <property type="entry name" value="PHOSPHATE REGULON SENSOR PROTEIN PHOR"/>
    <property type="match status" value="1"/>
</dbReference>
<dbReference type="PANTHER" id="PTHR45453:SF1">
    <property type="entry name" value="PHOSPHATE REGULON SENSOR PROTEIN PHOR"/>
    <property type="match status" value="1"/>
</dbReference>
<dbReference type="Pfam" id="PF02518">
    <property type="entry name" value="HATPase_c"/>
    <property type="match status" value="1"/>
</dbReference>
<dbReference type="Pfam" id="PF00512">
    <property type="entry name" value="HisKA"/>
    <property type="match status" value="1"/>
</dbReference>
<dbReference type="PRINTS" id="PR00344">
    <property type="entry name" value="BCTRLSENSOR"/>
</dbReference>
<dbReference type="SMART" id="SM00387">
    <property type="entry name" value="HATPase_c"/>
    <property type="match status" value="1"/>
</dbReference>
<dbReference type="SMART" id="SM00388">
    <property type="entry name" value="HisKA"/>
    <property type="match status" value="1"/>
</dbReference>
<dbReference type="SUPFAM" id="SSF55874">
    <property type="entry name" value="ATPase domain of HSP90 chaperone/DNA topoisomerase II/histidine kinase"/>
    <property type="match status" value="1"/>
</dbReference>
<dbReference type="SUPFAM" id="SSF47384">
    <property type="entry name" value="Homodimeric domain of signal transducing histidine kinase"/>
    <property type="match status" value="1"/>
</dbReference>
<dbReference type="PROSITE" id="PS50109">
    <property type="entry name" value="HIS_KIN"/>
    <property type="match status" value="1"/>
</dbReference>
<protein>
    <recommendedName>
        <fullName>Sensor protein CiaH</fullName>
        <ecNumber>2.7.13.3</ecNumber>
    </recommendedName>
</protein>
<reference key="1">
    <citation type="journal article" date="2001" name="Science">
        <title>Complete genome sequence of a virulent isolate of Streptococcus pneumoniae.</title>
        <authorList>
            <person name="Tettelin H."/>
            <person name="Nelson K.E."/>
            <person name="Paulsen I.T."/>
            <person name="Eisen J.A."/>
            <person name="Read T.D."/>
            <person name="Peterson S.N."/>
            <person name="Heidelberg J.F."/>
            <person name="DeBoy R.T."/>
            <person name="Haft D.H."/>
            <person name="Dodson R.J."/>
            <person name="Durkin A.S."/>
            <person name="Gwinn M.L."/>
            <person name="Kolonay J.F."/>
            <person name="Nelson W.C."/>
            <person name="Peterson J.D."/>
            <person name="Umayam L.A."/>
            <person name="White O."/>
            <person name="Salzberg S.L."/>
            <person name="Lewis M.R."/>
            <person name="Radune D."/>
            <person name="Holtzapple E.K."/>
            <person name="Khouri H.M."/>
            <person name="Wolf A.M."/>
            <person name="Utterback T.R."/>
            <person name="Hansen C.L."/>
            <person name="McDonald L.A."/>
            <person name="Feldblyum T.V."/>
            <person name="Angiuoli S.V."/>
            <person name="Dickinson T."/>
            <person name="Hickey E.K."/>
            <person name="Holt I.E."/>
            <person name="Loftus B.J."/>
            <person name="Yang F."/>
            <person name="Smith H.O."/>
            <person name="Venter J.C."/>
            <person name="Dougherty B.A."/>
            <person name="Morrison D.A."/>
            <person name="Hollingshead S.K."/>
            <person name="Fraser C.M."/>
        </authorList>
    </citation>
    <scope>NUCLEOTIDE SEQUENCE [LARGE SCALE GENOMIC DNA]</scope>
    <source>
        <strain>ATCC BAA-334 / TIGR4</strain>
    </source>
</reference>
<evidence type="ECO:0000250" key="1"/>
<evidence type="ECO:0000255" key="2"/>
<evidence type="ECO:0000255" key="3">
    <source>
        <dbReference type="PROSITE-ProRule" id="PRU00107"/>
    </source>
</evidence>